<name>BZAF_DESA6</name>
<proteinExistence type="evidence at protein level"/>
<sequence length="435" mass="48157">MKTQVEHAVDGIITEQMATVAHDEDLSPEYIRTMVAEGKIVIPNNSNSTPKPVGIGKGLRTKVNASIGTSSDIVNYQAEVRKARIAEQAGADTLMELSVGGNLDRVRREVLAAVNLPVGNVPLYQAFCDATRKYGSADKLDPEELFDLIEQQCEDGLAFMAIHCGINRYTIERLRKQHYRYGGLVSKGGTSMVSWMEHNNRENPLYEQFDRVVAILKKYDVCLSLGNGLRAGAIHDSHDRAQMQELIINCELAQLGREMGCQMLVEGPGHMPLDEVEANILIQKRMSNEAPYYMLGPISTDVVPGFDHISSAIGAAQSARYGADLICYITPAEHLALPNEDDVRSGVEAARVATYIGDMNKYPDKGRQRDKAMSKARRDLQWDKQFELALMPEQARQVRDSRLPEEEHSCTMCGNFCAANGSKTLFDGDLQGDKC</sequence>
<reference key="1">
    <citation type="submission" date="2006-05" db="EMBL/GenBank/DDBJ databases">
        <title>Annotation of the draft genome assembly of Desulfuromonas acetoxidans DSM 684.</title>
        <authorList>
            <consortium name="US DOE Joint Genome Institute (JGI-ORNL)"/>
            <person name="Larimer F."/>
            <person name="Land M."/>
            <person name="Hauser L."/>
        </authorList>
    </citation>
    <scope>NUCLEOTIDE SEQUENCE [LARGE SCALE GENOMIC DNA]</scope>
    <source>
        <strain>DSM 684 / 11070</strain>
    </source>
</reference>
<reference key="2">
    <citation type="submission" date="2006-05" db="EMBL/GenBank/DDBJ databases">
        <title>Sequencing of the draft genome and assembly of Desulfuromonas acetoxidans DSM 684.</title>
        <authorList>
            <consortium name="US DOE Joint Genome Institute (JGI-PGF)"/>
            <person name="Copeland A."/>
            <person name="Lucas S."/>
            <person name="Lapidus A."/>
            <person name="Barry K."/>
            <person name="Detter J.C."/>
            <person name="Glavina del Rio T."/>
            <person name="Hammon N."/>
            <person name="Israni S."/>
            <person name="Dalin E."/>
            <person name="Tice H."/>
            <person name="Bruce D."/>
            <person name="Pitluck S."/>
            <person name="Richardson P."/>
        </authorList>
    </citation>
    <scope>NUCLEOTIDE SEQUENCE [LARGE SCALE GENOMIC DNA]</scope>
    <source>
        <strain>DSM 684 / 11070</strain>
    </source>
</reference>
<reference key="3">
    <citation type="journal article" date="2015" name="J. Am. Chem. Soc.">
        <title>Anaerobic 5-hydroxybenzimidazole formation from aminoimidazole ribotide: an unanticipated intersection of thiamin and vitamin B12 biosynthesis.</title>
        <authorList>
            <person name="Mehta A.P."/>
            <person name="Abdelwahed S.H."/>
            <person name="Fenwick M.K."/>
            <person name="Hazra A.B."/>
            <person name="Taga M.E."/>
            <person name="Zhang Y."/>
            <person name="Ealick S.E."/>
            <person name="Begley T.P."/>
        </authorList>
    </citation>
    <scope>FUNCTION</scope>
    <scope>CATALYTIC ACTIVITY</scope>
    <scope>COFACTOR</scope>
    <scope>PATHWAY</scope>
    <scope>REACTION MECHANISM</scope>
    <scope>3D-STRUCTURE MODELING</scope>
    <source>
        <strain>DSM 684 / 11070</strain>
    </source>
</reference>
<protein>
    <recommendedName>
        <fullName evidence="3">5-hydroxybenzimidazole synthase</fullName>
        <shortName evidence="3">HBI synthase</shortName>
        <ecNumber evidence="2">4.1.99.23</ecNumber>
    </recommendedName>
</protein>
<gene>
    <name evidence="3" type="primary">bzaF</name>
    <name evidence="6" type="ORF">Dace_2479</name>
</gene>
<feature type="chain" id="PRO_0000441709" description="5-hydroxybenzimidazole synthase">
    <location>
        <begin position="1"/>
        <end position="435"/>
    </location>
</feature>
<feature type="binding site" evidence="1">
    <location>
        <position position="95"/>
    </location>
    <ligand>
        <name>substrate</name>
    </ligand>
</feature>
<feature type="binding site" evidence="1">
    <location>
        <position position="124"/>
    </location>
    <ligand>
        <name>substrate</name>
    </ligand>
</feature>
<feature type="binding site" evidence="1">
    <location>
        <position position="163"/>
    </location>
    <ligand>
        <name>substrate</name>
    </ligand>
</feature>
<feature type="binding site" evidence="1">
    <location>
        <begin position="186"/>
        <end position="188"/>
    </location>
    <ligand>
        <name>substrate</name>
    </ligand>
</feature>
<feature type="binding site" evidence="1">
    <location>
        <begin position="227"/>
        <end position="230"/>
    </location>
    <ligand>
        <name>substrate</name>
    </ligand>
</feature>
<feature type="binding site" evidence="1">
    <location>
        <position position="266"/>
    </location>
    <ligand>
        <name>substrate</name>
    </ligand>
</feature>
<feature type="binding site" evidence="1">
    <location>
        <position position="270"/>
    </location>
    <ligand>
        <name>Zn(2+)</name>
        <dbReference type="ChEBI" id="CHEBI:29105"/>
    </ligand>
</feature>
<feature type="binding site" evidence="1">
    <location>
        <position position="293"/>
    </location>
    <ligand>
        <name>substrate</name>
    </ligand>
</feature>
<feature type="binding site" evidence="1">
    <location>
        <position position="334"/>
    </location>
    <ligand>
        <name>Zn(2+)</name>
        <dbReference type="ChEBI" id="CHEBI:29105"/>
    </ligand>
</feature>
<feature type="binding site" evidence="1">
    <location>
        <position position="410"/>
    </location>
    <ligand>
        <name>[4Fe-4S] cluster</name>
        <dbReference type="ChEBI" id="CHEBI:49883"/>
        <note>4Fe-4S-S-AdoMet</note>
    </ligand>
</feature>
<feature type="binding site" evidence="1">
    <location>
        <position position="413"/>
    </location>
    <ligand>
        <name>[4Fe-4S] cluster</name>
        <dbReference type="ChEBI" id="CHEBI:49883"/>
        <note>4Fe-4S-S-AdoMet</note>
    </ligand>
</feature>
<feature type="binding site" evidence="1">
    <location>
        <position position="417"/>
    </location>
    <ligand>
        <name>[4Fe-4S] cluster</name>
        <dbReference type="ChEBI" id="CHEBI:49883"/>
        <note>4Fe-4S-S-AdoMet</note>
    </ligand>
</feature>
<evidence type="ECO:0000250" key="1">
    <source>
        <dbReference type="UniProtKB" id="Q9A6Q5"/>
    </source>
</evidence>
<evidence type="ECO:0000269" key="2">
    <source>
    </source>
</evidence>
<evidence type="ECO:0000303" key="3">
    <source>
    </source>
</evidence>
<evidence type="ECO:0000305" key="4"/>
<evidence type="ECO:0000305" key="5">
    <source>
    </source>
</evidence>
<evidence type="ECO:0000312" key="6">
    <source>
        <dbReference type="EMBL" id="EAT15779.1"/>
    </source>
</evidence>
<accession>Q1JZW3</accession>
<organism>
    <name type="scientific">Desulfuromonas acetoxidans (strain DSM 684 / 11070)</name>
    <dbReference type="NCBI Taxonomy" id="281689"/>
    <lineage>
        <taxon>Bacteria</taxon>
        <taxon>Pseudomonadati</taxon>
        <taxon>Thermodesulfobacteriota</taxon>
        <taxon>Desulfuromonadia</taxon>
        <taxon>Desulfuromonadales</taxon>
        <taxon>Desulfuromonadaceae</taxon>
        <taxon>Desulfuromonas</taxon>
    </lineage>
</organism>
<keyword id="KW-0004">4Fe-4S</keyword>
<keyword id="KW-0169">Cobalamin biosynthesis</keyword>
<keyword id="KW-0408">Iron</keyword>
<keyword id="KW-0411">Iron-sulfur</keyword>
<keyword id="KW-0456">Lyase</keyword>
<keyword id="KW-0479">Metal-binding</keyword>
<keyword id="KW-1185">Reference proteome</keyword>
<keyword id="KW-0949">S-adenosyl-L-methionine</keyword>
<keyword id="KW-0862">Zinc</keyword>
<comment type="function">
    <text evidence="2">Catalyzes the complex conversion of aminoimidazole ribotide (AIR) to 5-hydroxybenzimidazole (5-HBI) in a radical S-adenosyl-L-methionine (SAM)-dependent reaction. Is thus involved in the anaerobic biosynthesis of dimethylbenzimidazole (DMB), the lower axial ligand of vitamin B12 (cobalamin).</text>
</comment>
<comment type="catalytic activity">
    <reaction evidence="2">
        <text>5-amino-1-(5-phospho-beta-D-ribosyl)imidazole + AH2 + S-adenosyl-L-methionine = 5-hydroxybenzimidazole + 5'-deoxyadenosine + formate + L-methionine + A + NH4(+) + phosphate + 2 H(+)</text>
        <dbReference type="Rhea" id="RHEA:53504"/>
        <dbReference type="ChEBI" id="CHEBI:13193"/>
        <dbReference type="ChEBI" id="CHEBI:15378"/>
        <dbReference type="ChEBI" id="CHEBI:15740"/>
        <dbReference type="ChEBI" id="CHEBI:17319"/>
        <dbReference type="ChEBI" id="CHEBI:17499"/>
        <dbReference type="ChEBI" id="CHEBI:28938"/>
        <dbReference type="ChEBI" id="CHEBI:43474"/>
        <dbReference type="ChEBI" id="CHEBI:57844"/>
        <dbReference type="ChEBI" id="CHEBI:59789"/>
        <dbReference type="ChEBI" id="CHEBI:137404"/>
        <dbReference type="ChEBI" id="CHEBI:137981"/>
        <dbReference type="EC" id="4.1.99.23"/>
    </reaction>
</comment>
<comment type="cofactor">
    <cofactor evidence="2">
        <name>[4Fe-4S] cluster</name>
        <dbReference type="ChEBI" id="CHEBI:49883"/>
    </cofactor>
    <text evidence="1">Binds 1 [4Fe-4S] cluster per subunit. The cluster is coordinated with 3 cysteines and an exchangeable S-adenosyl-L-methionine.</text>
</comment>
<comment type="pathway">
    <text evidence="5">Cofactor biosynthesis; adenosylcobalamin biosynthesis.</text>
</comment>
<comment type="subunit">
    <text evidence="1">Homodimer.</text>
</comment>
<comment type="similarity">
    <text evidence="4">Belongs to the ThiC family. 5-hydroxybenzimidazole synthase subfamily.</text>
</comment>
<dbReference type="EC" id="4.1.99.23" evidence="2"/>
<dbReference type="EMBL" id="AAEW02000008">
    <property type="protein sequence ID" value="EAT15779.1"/>
    <property type="molecule type" value="Genomic_DNA"/>
</dbReference>
<dbReference type="RefSeq" id="WP_006000218.1">
    <property type="nucleotide sequence ID" value="NZ_AAEW02000008.1"/>
</dbReference>
<dbReference type="SMR" id="Q1JZW3"/>
<dbReference type="OrthoDB" id="9805897at2"/>
<dbReference type="BioCyc" id="MetaCyc:MONOMER-19551"/>
<dbReference type="UniPathway" id="UPA00148"/>
<dbReference type="Proteomes" id="UP000005695">
    <property type="component" value="Unassembled WGS sequence"/>
</dbReference>
<dbReference type="GO" id="GO:0005829">
    <property type="term" value="C:cytosol"/>
    <property type="evidence" value="ECO:0007669"/>
    <property type="project" value="TreeGrafter"/>
</dbReference>
<dbReference type="GO" id="GO:0051539">
    <property type="term" value="F:4 iron, 4 sulfur cluster binding"/>
    <property type="evidence" value="ECO:0007669"/>
    <property type="project" value="UniProtKB-KW"/>
</dbReference>
<dbReference type="GO" id="GO:0016829">
    <property type="term" value="F:lyase activity"/>
    <property type="evidence" value="ECO:0007669"/>
    <property type="project" value="UniProtKB-KW"/>
</dbReference>
<dbReference type="GO" id="GO:0046872">
    <property type="term" value="F:metal ion binding"/>
    <property type="evidence" value="ECO:0007669"/>
    <property type="project" value="UniProtKB-KW"/>
</dbReference>
<dbReference type="GO" id="GO:0009236">
    <property type="term" value="P:cobalamin biosynthetic process"/>
    <property type="evidence" value="ECO:0007669"/>
    <property type="project" value="UniProtKB-UniPathway"/>
</dbReference>
<dbReference type="GO" id="GO:0009228">
    <property type="term" value="P:thiamine biosynthetic process"/>
    <property type="evidence" value="ECO:0007669"/>
    <property type="project" value="InterPro"/>
</dbReference>
<dbReference type="FunFam" id="3.20.20.540:FF:000001">
    <property type="entry name" value="Phosphomethylpyrimidine synthase"/>
    <property type="match status" value="1"/>
</dbReference>
<dbReference type="Gene3D" id="6.10.250.620">
    <property type="match status" value="1"/>
</dbReference>
<dbReference type="Gene3D" id="3.20.20.540">
    <property type="entry name" value="Radical SAM ThiC family, central domain"/>
    <property type="match status" value="1"/>
</dbReference>
<dbReference type="InterPro" id="IPR038521">
    <property type="entry name" value="ThiC/Bza_core_dom"/>
</dbReference>
<dbReference type="InterPro" id="IPR002817">
    <property type="entry name" value="ThiC/BzaA/B"/>
</dbReference>
<dbReference type="NCBIfam" id="NF009895">
    <property type="entry name" value="PRK13352.1"/>
    <property type="match status" value="1"/>
</dbReference>
<dbReference type="NCBIfam" id="TIGR00190">
    <property type="entry name" value="thiC"/>
    <property type="match status" value="1"/>
</dbReference>
<dbReference type="PANTHER" id="PTHR30557:SF1">
    <property type="entry name" value="PHOSPHOMETHYLPYRIMIDINE SYNTHASE, CHLOROPLASTIC"/>
    <property type="match status" value="1"/>
</dbReference>
<dbReference type="PANTHER" id="PTHR30557">
    <property type="entry name" value="THIAMINE BIOSYNTHESIS PROTEIN THIC"/>
    <property type="match status" value="1"/>
</dbReference>
<dbReference type="Pfam" id="PF01964">
    <property type="entry name" value="ThiC_Rad_SAM"/>
    <property type="match status" value="1"/>
</dbReference>
<dbReference type="SFLD" id="SFLDF00407">
    <property type="entry name" value="phosphomethylpyrimidine_syntha"/>
    <property type="match status" value="1"/>
</dbReference>
<dbReference type="SFLD" id="SFLDG01114">
    <property type="entry name" value="phosphomethylpyrimidine_syntha"/>
    <property type="match status" value="1"/>
</dbReference>
<dbReference type="SFLD" id="SFLDS00113">
    <property type="entry name" value="Radical_SAM_Phosphomethylpyrim"/>
    <property type="match status" value="1"/>
</dbReference>